<reference key="1">
    <citation type="submission" date="2006-09" db="EMBL/GenBank/DDBJ databases">
        <title>Complete sequence of chromosome 1 of Shewanella sp. ANA-3.</title>
        <authorList>
            <person name="Copeland A."/>
            <person name="Lucas S."/>
            <person name="Lapidus A."/>
            <person name="Barry K."/>
            <person name="Detter J.C."/>
            <person name="Glavina del Rio T."/>
            <person name="Hammon N."/>
            <person name="Israni S."/>
            <person name="Dalin E."/>
            <person name="Tice H."/>
            <person name="Pitluck S."/>
            <person name="Chertkov O."/>
            <person name="Brettin T."/>
            <person name="Bruce D."/>
            <person name="Han C."/>
            <person name="Tapia R."/>
            <person name="Gilna P."/>
            <person name="Schmutz J."/>
            <person name="Larimer F."/>
            <person name="Land M."/>
            <person name="Hauser L."/>
            <person name="Kyrpides N."/>
            <person name="Kim E."/>
            <person name="Newman D."/>
            <person name="Salticov C."/>
            <person name="Konstantinidis K."/>
            <person name="Klappenback J."/>
            <person name="Tiedje J."/>
            <person name="Richardson P."/>
        </authorList>
    </citation>
    <scope>NUCLEOTIDE SEQUENCE [LARGE SCALE GENOMIC DNA]</scope>
    <source>
        <strain>ANA-3</strain>
    </source>
</reference>
<organism>
    <name type="scientific">Shewanella sp. (strain ANA-3)</name>
    <dbReference type="NCBI Taxonomy" id="94122"/>
    <lineage>
        <taxon>Bacteria</taxon>
        <taxon>Pseudomonadati</taxon>
        <taxon>Pseudomonadota</taxon>
        <taxon>Gammaproteobacteria</taxon>
        <taxon>Alteromonadales</taxon>
        <taxon>Shewanellaceae</taxon>
        <taxon>Shewanella</taxon>
    </lineage>
</organism>
<comment type="function">
    <text evidence="1">Poorly processive, error-prone DNA polymerase involved in untargeted mutagenesis. Copies undamaged DNA at stalled replication forks, which arise in vivo from mismatched or misaligned primer ends. These misaligned primers can be extended by PolIV. Exhibits no 3'-5' exonuclease (proofreading) activity. May be involved in translesional synthesis, in conjunction with the beta clamp from PolIII.</text>
</comment>
<comment type="catalytic activity">
    <reaction evidence="1">
        <text>DNA(n) + a 2'-deoxyribonucleoside 5'-triphosphate = DNA(n+1) + diphosphate</text>
        <dbReference type="Rhea" id="RHEA:22508"/>
        <dbReference type="Rhea" id="RHEA-COMP:17339"/>
        <dbReference type="Rhea" id="RHEA-COMP:17340"/>
        <dbReference type="ChEBI" id="CHEBI:33019"/>
        <dbReference type="ChEBI" id="CHEBI:61560"/>
        <dbReference type="ChEBI" id="CHEBI:173112"/>
        <dbReference type="EC" id="2.7.7.7"/>
    </reaction>
</comment>
<comment type="cofactor">
    <cofactor evidence="1">
        <name>Mg(2+)</name>
        <dbReference type="ChEBI" id="CHEBI:18420"/>
    </cofactor>
    <text evidence="1">Binds 2 magnesium ions per subunit.</text>
</comment>
<comment type="subunit">
    <text evidence="1">Monomer.</text>
</comment>
<comment type="subcellular location">
    <subcellularLocation>
        <location evidence="1">Cytoplasm</location>
    </subcellularLocation>
</comment>
<comment type="similarity">
    <text evidence="1">Belongs to the DNA polymerase type-Y family.</text>
</comment>
<protein>
    <recommendedName>
        <fullName evidence="1">DNA polymerase IV</fullName>
        <shortName evidence="1">Pol IV</shortName>
        <ecNumber evidence="1">2.7.7.7</ecNumber>
    </recommendedName>
</protein>
<dbReference type="EC" id="2.7.7.7" evidence="1"/>
<dbReference type="EMBL" id="CP000469">
    <property type="protein sequence ID" value="ABK47184.1"/>
    <property type="molecule type" value="Genomic_DNA"/>
</dbReference>
<dbReference type="RefSeq" id="WP_011716075.1">
    <property type="nucleotide sequence ID" value="NC_008577.1"/>
</dbReference>
<dbReference type="SMR" id="A0KTR5"/>
<dbReference type="STRING" id="94122.Shewana3_0949"/>
<dbReference type="KEGG" id="shn:Shewana3_0949"/>
<dbReference type="eggNOG" id="COG0389">
    <property type="taxonomic scope" value="Bacteria"/>
</dbReference>
<dbReference type="HOGENOM" id="CLU_012348_1_2_6"/>
<dbReference type="OrthoDB" id="9808813at2"/>
<dbReference type="Proteomes" id="UP000002589">
    <property type="component" value="Chromosome"/>
</dbReference>
<dbReference type="GO" id="GO:0005829">
    <property type="term" value="C:cytosol"/>
    <property type="evidence" value="ECO:0007669"/>
    <property type="project" value="TreeGrafter"/>
</dbReference>
<dbReference type="GO" id="GO:0003684">
    <property type="term" value="F:damaged DNA binding"/>
    <property type="evidence" value="ECO:0007669"/>
    <property type="project" value="InterPro"/>
</dbReference>
<dbReference type="GO" id="GO:0003887">
    <property type="term" value="F:DNA-directed DNA polymerase activity"/>
    <property type="evidence" value="ECO:0007669"/>
    <property type="project" value="UniProtKB-UniRule"/>
</dbReference>
<dbReference type="GO" id="GO:0000287">
    <property type="term" value="F:magnesium ion binding"/>
    <property type="evidence" value="ECO:0007669"/>
    <property type="project" value="UniProtKB-UniRule"/>
</dbReference>
<dbReference type="GO" id="GO:0006261">
    <property type="term" value="P:DNA-templated DNA replication"/>
    <property type="evidence" value="ECO:0007669"/>
    <property type="project" value="UniProtKB-UniRule"/>
</dbReference>
<dbReference type="GO" id="GO:0042276">
    <property type="term" value="P:error-prone translesion synthesis"/>
    <property type="evidence" value="ECO:0007669"/>
    <property type="project" value="TreeGrafter"/>
</dbReference>
<dbReference type="GO" id="GO:0009432">
    <property type="term" value="P:SOS response"/>
    <property type="evidence" value="ECO:0007669"/>
    <property type="project" value="TreeGrafter"/>
</dbReference>
<dbReference type="CDD" id="cd03586">
    <property type="entry name" value="PolY_Pol_IV_kappa"/>
    <property type="match status" value="1"/>
</dbReference>
<dbReference type="FunFam" id="1.10.150.20:FF:000019">
    <property type="entry name" value="DNA polymerase IV"/>
    <property type="match status" value="1"/>
</dbReference>
<dbReference type="FunFam" id="3.40.1170.60:FF:000001">
    <property type="entry name" value="DNA polymerase IV"/>
    <property type="match status" value="1"/>
</dbReference>
<dbReference type="Gene3D" id="3.30.70.270">
    <property type="match status" value="1"/>
</dbReference>
<dbReference type="Gene3D" id="3.40.1170.60">
    <property type="match status" value="1"/>
</dbReference>
<dbReference type="Gene3D" id="1.10.150.20">
    <property type="entry name" value="5' to 3' exonuclease, C-terminal subdomain"/>
    <property type="match status" value="1"/>
</dbReference>
<dbReference type="Gene3D" id="3.30.1490.100">
    <property type="entry name" value="DNA polymerase, Y-family, little finger domain"/>
    <property type="match status" value="1"/>
</dbReference>
<dbReference type="HAMAP" id="MF_01113">
    <property type="entry name" value="DNApol_IV"/>
    <property type="match status" value="1"/>
</dbReference>
<dbReference type="InterPro" id="IPR043502">
    <property type="entry name" value="DNA/RNA_pol_sf"/>
</dbReference>
<dbReference type="InterPro" id="IPR036775">
    <property type="entry name" value="DNA_pol_Y-fam_lit_finger_sf"/>
</dbReference>
<dbReference type="InterPro" id="IPR017961">
    <property type="entry name" value="DNA_pol_Y-fam_little_finger"/>
</dbReference>
<dbReference type="InterPro" id="IPR050116">
    <property type="entry name" value="DNA_polymerase-Y"/>
</dbReference>
<dbReference type="InterPro" id="IPR022880">
    <property type="entry name" value="DNApol_IV"/>
</dbReference>
<dbReference type="InterPro" id="IPR053848">
    <property type="entry name" value="IMS_HHH_1"/>
</dbReference>
<dbReference type="InterPro" id="IPR043128">
    <property type="entry name" value="Rev_trsase/Diguanyl_cyclase"/>
</dbReference>
<dbReference type="InterPro" id="IPR001126">
    <property type="entry name" value="UmuC"/>
</dbReference>
<dbReference type="NCBIfam" id="NF002677">
    <property type="entry name" value="PRK02406.1"/>
    <property type="match status" value="1"/>
</dbReference>
<dbReference type="PANTHER" id="PTHR11076:SF33">
    <property type="entry name" value="DNA POLYMERASE KAPPA"/>
    <property type="match status" value="1"/>
</dbReference>
<dbReference type="PANTHER" id="PTHR11076">
    <property type="entry name" value="DNA REPAIR POLYMERASE UMUC / TRANSFERASE FAMILY MEMBER"/>
    <property type="match status" value="1"/>
</dbReference>
<dbReference type="Pfam" id="PF00817">
    <property type="entry name" value="IMS"/>
    <property type="match status" value="1"/>
</dbReference>
<dbReference type="Pfam" id="PF11799">
    <property type="entry name" value="IMS_C"/>
    <property type="match status" value="1"/>
</dbReference>
<dbReference type="Pfam" id="PF21999">
    <property type="entry name" value="IMS_HHH_1"/>
    <property type="match status" value="1"/>
</dbReference>
<dbReference type="SUPFAM" id="SSF56672">
    <property type="entry name" value="DNA/RNA polymerases"/>
    <property type="match status" value="1"/>
</dbReference>
<dbReference type="SUPFAM" id="SSF100879">
    <property type="entry name" value="Lesion bypass DNA polymerase (Y-family), little finger domain"/>
    <property type="match status" value="1"/>
</dbReference>
<dbReference type="PROSITE" id="PS50173">
    <property type="entry name" value="UMUC"/>
    <property type="match status" value="1"/>
</dbReference>
<sequence length="359" mass="39800">MRKIIHIDMDCYFAAVEMRDFPEYRGKPLAVGGSRVQRGVISTCNYEARKFGVRSAMATGYALKLCPDLILVPGRMQVYKEVSQQIRAIFCRYTELIEPLSLDEAYLDVSDCKLFKGSATLIAEAIRRDILAETGLTASAGVAPIKFLAKVASDLNKPNGQCVIPPDEVAEFVKSLSLRKIPGVGKVTAEKLSSLGLNTCADVQAYPKQELIARFGKFGTVLVERAHGIDERGISVSRERKSVGVETTLAQDIYTLEQCQQVMPGLIQELSSRLGRSAKGRQIHKQVVKLKFNDFKQTTIEHRSDEVSVVMFYELLSQAMARQEGRGIRLLGVSVGLAESKDTLSPLMVRETKQLDFVF</sequence>
<accession>A0KTR5</accession>
<gene>
    <name evidence="1" type="primary">dinB</name>
    <name type="ordered locus">Shewana3_0949</name>
</gene>
<feature type="chain" id="PRO_1000084935" description="DNA polymerase IV">
    <location>
        <begin position="1"/>
        <end position="359"/>
    </location>
</feature>
<feature type="domain" description="UmuC" evidence="1">
    <location>
        <begin position="4"/>
        <end position="185"/>
    </location>
</feature>
<feature type="active site" evidence="1">
    <location>
        <position position="104"/>
    </location>
</feature>
<feature type="binding site" evidence="1">
    <location>
        <position position="8"/>
    </location>
    <ligand>
        <name>Mg(2+)</name>
        <dbReference type="ChEBI" id="CHEBI:18420"/>
    </ligand>
</feature>
<feature type="binding site" evidence="1">
    <location>
        <position position="103"/>
    </location>
    <ligand>
        <name>Mg(2+)</name>
        <dbReference type="ChEBI" id="CHEBI:18420"/>
    </ligand>
</feature>
<feature type="site" description="Substrate discrimination" evidence="1">
    <location>
        <position position="13"/>
    </location>
</feature>
<proteinExistence type="inferred from homology"/>
<evidence type="ECO:0000255" key="1">
    <source>
        <dbReference type="HAMAP-Rule" id="MF_01113"/>
    </source>
</evidence>
<name>DPO4_SHESA</name>
<keyword id="KW-0963">Cytoplasm</keyword>
<keyword id="KW-0227">DNA damage</keyword>
<keyword id="KW-0234">DNA repair</keyword>
<keyword id="KW-0235">DNA replication</keyword>
<keyword id="KW-0238">DNA-binding</keyword>
<keyword id="KW-0239">DNA-directed DNA polymerase</keyword>
<keyword id="KW-0460">Magnesium</keyword>
<keyword id="KW-0479">Metal-binding</keyword>
<keyword id="KW-0515">Mutator protein</keyword>
<keyword id="KW-0548">Nucleotidyltransferase</keyword>
<keyword id="KW-0808">Transferase</keyword>